<evidence type="ECO:0000255" key="1">
    <source>
        <dbReference type="HAMAP-Rule" id="MF_01320"/>
    </source>
</evidence>
<evidence type="ECO:0000256" key="2">
    <source>
        <dbReference type="SAM" id="MobiDB-lite"/>
    </source>
</evidence>
<evidence type="ECO:0000305" key="3"/>
<name>RL2_NITSB</name>
<sequence length="275" mass="30350">MAVKKYKPYTPSRRFMSVVDSSDITAKPSVRKLLVKLPARAGRNNQGRITSRHREAGAKKLYRIIDFKRNKYGVPGRVATIEYDPYRNCRIALVVYRDGDKRYIIQPSGLKVGDTVEAAEAGLDVLPGNAMKLKNIPVGTLVHNIEMKPGKGGQLARSAGAYAQIMGREDKYVILRLPSGEMRKILGECMATIGVVGNEEYANIVIGKAGRNRHRGIRPQTRGSAMNPVDHPHGGGEGKTGPSGHPVTPWGMPTKGYKTRRKKPSDKLIISRRKK</sequence>
<reference key="1">
    <citation type="journal article" date="2007" name="Proc. Natl. Acad. Sci. U.S.A.">
        <title>Deep-sea vent epsilon-proteobacterial genomes provide insights into emergence of pathogens.</title>
        <authorList>
            <person name="Nakagawa S."/>
            <person name="Takaki Y."/>
            <person name="Shimamura S."/>
            <person name="Reysenbach A.-L."/>
            <person name="Takai K."/>
            <person name="Horikoshi K."/>
        </authorList>
    </citation>
    <scope>NUCLEOTIDE SEQUENCE [LARGE SCALE GENOMIC DNA]</scope>
    <source>
        <strain>SB155-2</strain>
    </source>
</reference>
<dbReference type="EMBL" id="AP009178">
    <property type="protein sequence ID" value="BAF69340.1"/>
    <property type="molecule type" value="Genomic_DNA"/>
</dbReference>
<dbReference type="RefSeq" id="WP_012081603.1">
    <property type="nucleotide sequence ID" value="NC_009662.1"/>
</dbReference>
<dbReference type="SMR" id="A6Q1I1"/>
<dbReference type="FunCoup" id="A6Q1I1">
    <property type="interactions" value="574"/>
</dbReference>
<dbReference type="STRING" id="387092.NIS_0226"/>
<dbReference type="KEGG" id="nis:NIS_0226"/>
<dbReference type="eggNOG" id="COG0090">
    <property type="taxonomic scope" value="Bacteria"/>
</dbReference>
<dbReference type="HOGENOM" id="CLU_036235_2_1_7"/>
<dbReference type="InParanoid" id="A6Q1I1"/>
<dbReference type="OrthoDB" id="9778722at2"/>
<dbReference type="Proteomes" id="UP000001118">
    <property type="component" value="Chromosome"/>
</dbReference>
<dbReference type="GO" id="GO:0015934">
    <property type="term" value="C:large ribosomal subunit"/>
    <property type="evidence" value="ECO:0007669"/>
    <property type="project" value="InterPro"/>
</dbReference>
<dbReference type="GO" id="GO:0019843">
    <property type="term" value="F:rRNA binding"/>
    <property type="evidence" value="ECO:0007669"/>
    <property type="project" value="UniProtKB-UniRule"/>
</dbReference>
<dbReference type="GO" id="GO:0003735">
    <property type="term" value="F:structural constituent of ribosome"/>
    <property type="evidence" value="ECO:0007669"/>
    <property type="project" value="InterPro"/>
</dbReference>
<dbReference type="GO" id="GO:0016740">
    <property type="term" value="F:transferase activity"/>
    <property type="evidence" value="ECO:0007669"/>
    <property type="project" value="InterPro"/>
</dbReference>
<dbReference type="GO" id="GO:0002181">
    <property type="term" value="P:cytoplasmic translation"/>
    <property type="evidence" value="ECO:0007669"/>
    <property type="project" value="TreeGrafter"/>
</dbReference>
<dbReference type="FunFam" id="2.30.30.30:FF:000001">
    <property type="entry name" value="50S ribosomal protein L2"/>
    <property type="match status" value="1"/>
</dbReference>
<dbReference type="FunFam" id="2.40.50.140:FF:000003">
    <property type="entry name" value="50S ribosomal protein L2"/>
    <property type="match status" value="1"/>
</dbReference>
<dbReference type="FunFam" id="4.10.950.10:FF:000001">
    <property type="entry name" value="50S ribosomal protein L2"/>
    <property type="match status" value="1"/>
</dbReference>
<dbReference type="Gene3D" id="2.30.30.30">
    <property type="match status" value="1"/>
</dbReference>
<dbReference type="Gene3D" id="2.40.50.140">
    <property type="entry name" value="Nucleic acid-binding proteins"/>
    <property type="match status" value="1"/>
</dbReference>
<dbReference type="Gene3D" id="4.10.950.10">
    <property type="entry name" value="Ribosomal protein L2, domain 3"/>
    <property type="match status" value="1"/>
</dbReference>
<dbReference type="HAMAP" id="MF_01320_B">
    <property type="entry name" value="Ribosomal_uL2_B"/>
    <property type="match status" value="1"/>
</dbReference>
<dbReference type="InterPro" id="IPR012340">
    <property type="entry name" value="NA-bd_OB-fold"/>
</dbReference>
<dbReference type="InterPro" id="IPR014722">
    <property type="entry name" value="Rib_uL2_dom2"/>
</dbReference>
<dbReference type="InterPro" id="IPR002171">
    <property type="entry name" value="Ribosomal_uL2"/>
</dbReference>
<dbReference type="InterPro" id="IPR005880">
    <property type="entry name" value="Ribosomal_uL2_bac/org-type"/>
</dbReference>
<dbReference type="InterPro" id="IPR022669">
    <property type="entry name" value="Ribosomal_uL2_C"/>
</dbReference>
<dbReference type="InterPro" id="IPR022671">
    <property type="entry name" value="Ribosomal_uL2_CS"/>
</dbReference>
<dbReference type="InterPro" id="IPR014726">
    <property type="entry name" value="Ribosomal_uL2_dom3"/>
</dbReference>
<dbReference type="InterPro" id="IPR022666">
    <property type="entry name" value="Ribosomal_uL2_RNA-bd_dom"/>
</dbReference>
<dbReference type="InterPro" id="IPR008991">
    <property type="entry name" value="Translation_prot_SH3-like_sf"/>
</dbReference>
<dbReference type="NCBIfam" id="TIGR01171">
    <property type="entry name" value="rplB_bact"/>
    <property type="match status" value="1"/>
</dbReference>
<dbReference type="PANTHER" id="PTHR13691:SF5">
    <property type="entry name" value="LARGE RIBOSOMAL SUBUNIT PROTEIN UL2M"/>
    <property type="match status" value="1"/>
</dbReference>
<dbReference type="PANTHER" id="PTHR13691">
    <property type="entry name" value="RIBOSOMAL PROTEIN L2"/>
    <property type="match status" value="1"/>
</dbReference>
<dbReference type="Pfam" id="PF00181">
    <property type="entry name" value="Ribosomal_L2"/>
    <property type="match status" value="1"/>
</dbReference>
<dbReference type="Pfam" id="PF03947">
    <property type="entry name" value="Ribosomal_L2_C"/>
    <property type="match status" value="1"/>
</dbReference>
<dbReference type="PIRSF" id="PIRSF002158">
    <property type="entry name" value="Ribosomal_L2"/>
    <property type="match status" value="1"/>
</dbReference>
<dbReference type="SMART" id="SM01383">
    <property type="entry name" value="Ribosomal_L2"/>
    <property type="match status" value="1"/>
</dbReference>
<dbReference type="SMART" id="SM01382">
    <property type="entry name" value="Ribosomal_L2_C"/>
    <property type="match status" value="1"/>
</dbReference>
<dbReference type="SUPFAM" id="SSF50249">
    <property type="entry name" value="Nucleic acid-binding proteins"/>
    <property type="match status" value="1"/>
</dbReference>
<dbReference type="SUPFAM" id="SSF50104">
    <property type="entry name" value="Translation proteins SH3-like domain"/>
    <property type="match status" value="1"/>
</dbReference>
<dbReference type="PROSITE" id="PS00467">
    <property type="entry name" value="RIBOSOMAL_L2"/>
    <property type="match status" value="1"/>
</dbReference>
<proteinExistence type="inferred from homology"/>
<organism>
    <name type="scientific">Nitratiruptor sp. (strain SB155-2)</name>
    <dbReference type="NCBI Taxonomy" id="387092"/>
    <lineage>
        <taxon>Bacteria</taxon>
        <taxon>Pseudomonadati</taxon>
        <taxon>Campylobacterota</taxon>
        <taxon>Epsilonproteobacteria</taxon>
        <taxon>Nautiliales</taxon>
        <taxon>Nitratiruptoraceae</taxon>
        <taxon>Nitratiruptor</taxon>
    </lineage>
</organism>
<keyword id="KW-1185">Reference proteome</keyword>
<keyword id="KW-0687">Ribonucleoprotein</keyword>
<keyword id="KW-0689">Ribosomal protein</keyword>
<keyword id="KW-0694">RNA-binding</keyword>
<keyword id="KW-0699">rRNA-binding</keyword>
<comment type="function">
    <text evidence="1">One of the primary rRNA binding proteins. Required for association of the 30S and 50S subunits to form the 70S ribosome, for tRNA binding and peptide bond formation. It has been suggested to have peptidyltransferase activity; this is somewhat controversial. Makes several contacts with the 16S rRNA in the 70S ribosome.</text>
</comment>
<comment type="subunit">
    <text evidence="1">Part of the 50S ribosomal subunit. Forms a bridge to the 30S subunit in the 70S ribosome.</text>
</comment>
<comment type="similarity">
    <text evidence="1">Belongs to the universal ribosomal protein uL2 family.</text>
</comment>
<protein>
    <recommendedName>
        <fullName evidence="1">Large ribosomal subunit protein uL2</fullName>
    </recommendedName>
    <alternativeName>
        <fullName evidence="3">50S ribosomal protein L2</fullName>
    </alternativeName>
</protein>
<accession>A6Q1I1</accession>
<gene>
    <name evidence="1" type="primary">rplB</name>
    <name type="ordered locus">NIS_0226</name>
</gene>
<feature type="chain" id="PRO_0000309968" description="Large ribosomal subunit protein uL2">
    <location>
        <begin position="1"/>
        <end position="275"/>
    </location>
</feature>
<feature type="region of interest" description="Disordered" evidence="2">
    <location>
        <begin position="212"/>
        <end position="275"/>
    </location>
</feature>
<feature type="compositionally biased region" description="Basic residues" evidence="2">
    <location>
        <begin position="257"/>
        <end position="275"/>
    </location>
</feature>